<keyword id="KW-0007">Acetylation</keyword>
<keyword id="KW-0238">DNA-binding</keyword>
<keyword id="KW-0539">Nucleus</keyword>
<keyword id="KW-0597">Phosphoprotein</keyword>
<keyword id="KW-1185">Reference proteome</keyword>
<keyword id="KW-0804">Transcription</keyword>
<keyword id="KW-0805">Transcription regulation</keyword>
<gene>
    <name type="primary">Gtf2f1</name>
</gene>
<comment type="function">
    <text evidence="1">TFIIF is a general transcription initiation factor that binds to RNA polymerase II and helps to recruit it to the initiation complex in collaboration with TFIIB. It promotes transcription elongation (By similarity).</text>
</comment>
<comment type="subunit">
    <text evidence="2">Heterodimer of an alpha and a beta subunit. Interacts with GTF2F2, CTDP1, TAF6/TAFII80 and URI1. Interacts with GTF2B (via C-terminus and preferentially via acetylated form); this interaction prevents binding of GTF2B to GTF2F2. Part of TBP-based Pol II pre-initiation complex (PIC), in which Pol II core assembles with general transcription factors and other specific initiation factors including GTF2E1, GTF2E2, GTF2F1, GTF2F2, TCEA1, ERCC2, ERCC3, GTF2H2, GTF2H3, GTF2H4, GTF2H5, GTF2A1, GTF2A2, GTF2B and TBP; this large multi-subunit PIC complex mediates DNA unwinding and targets Pol II core to the transcription start site where the first phosphodiester bond forms.</text>
</comment>
<comment type="subcellular location">
    <subcellularLocation>
        <location evidence="1">Nucleus</location>
    </subcellularLocation>
</comment>
<comment type="PTM">
    <text evidence="1">Phosphorylated on Ser and other residues by TAF1 and casein kinase II-like kinases.</text>
</comment>
<comment type="similarity">
    <text evidence="4">Belongs to the TFIIF alpha subunit family.</text>
</comment>
<dbReference type="EMBL" id="BC079136">
    <property type="protein sequence ID" value="AAH79136.1"/>
    <property type="molecule type" value="mRNA"/>
</dbReference>
<dbReference type="RefSeq" id="NP_001007712.1">
    <property type="nucleotide sequence ID" value="NM_001007711.1"/>
</dbReference>
<dbReference type="RefSeq" id="XP_006244383.1">
    <property type="nucleotide sequence ID" value="XM_006244321.3"/>
</dbReference>
<dbReference type="SMR" id="Q6AY96"/>
<dbReference type="BioGRID" id="261260">
    <property type="interactions" value="1"/>
</dbReference>
<dbReference type="FunCoup" id="Q6AY96">
    <property type="interactions" value="2416"/>
</dbReference>
<dbReference type="IntAct" id="Q6AY96">
    <property type="interactions" value="1"/>
</dbReference>
<dbReference type="STRING" id="10116.ENSRNOP00000064830"/>
<dbReference type="GlyGen" id="Q6AY96">
    <property type="glycosylation" value="1 site"/>
</dbReference>
<dbReference type="iPTMnet" id="Q6AY96"/>
<dbReference type="PhosphoSitePlus" id="Q6AY96"/>
<dbReference type="jPOST" id="Q6AY96"/>
<dbReference type="PaxDb" id="10116-ENSRNOP00000064830"/>
<dbReference type="Ensembl" id="ENSRNOT00000073683.3">
    <property type="protein sequence ID" value="ENSRNOP00000064830.1"/>
    <property type="gene ID" value="ENSRNOG00000047134.3"/>
</dbReference>
<dbReference type="GeneID" id="316123"/>
<dbReference type="KEGG" id="rno:316123"/>
<dbReference type="AGR" id="RGD:1359646"/>
<dbReference type="CTD" id="2962"/>
<dbReference type="RGD" id="1359646">
    <property type="gene designation" value="Gtf2f1"/>
</dbReference>
<dbReference type="eggNOG" id="KOG2393">
    <property type="taxonomic scope" value="Eukaryota"/>
</dbReference>
<dbReference type="GeneTree" id="ENSGT00440000038032"/>
<dbReference type="HOGENOM" id="CLU_027572_2_0_1"/>
<dbReference type="InParanoid" id="Q6AY96"/>
<dbReference type="OMA" id="VTCGKTM"/>
<dbReference type="OrthoDB" id="76676at2759"/>
<dbReference type="PhylomeDB" id="Q6AY96"/>
<dbReference type="Reactome" id="R-RNO-112382">
    <property type="pathway name" value="Formation of RNA Pol II elongation complex"/>
</dbReference>
<dbReference type="Reactome" id="R-RNO-113418">
    <property type="pathway name" value="Formation of the Early Elongation Complex"/>
</dbReference>
<dbReference type="Reactome" id="R-RNO-674695">
    <property type="pathway name" value="RNA Polymerase II Pre-transcription Events"/>
</dbReference>
<dbReference type="Reactome" id="R-RNO-6796648">
    <property type="pathway name" value="TP53 Regulates Transcription of DNA Repair Genes"/>
</dbReference>
<dbReference type="Reactome" id="R-RNO-6803529">
    <property type="pathway name" value="FGFR2 alternative splicing"/>
</dbReference>
<dbReference type="Reactome" id="R-RNO-6807505">
    <property type="pathway name" value="RNA polymerase II transcribes snRNA genes"/>
</dbReference>
<dbReference type="Reactome" id="R-RNO-72086">
    <property type="pathway name" value="mRNA Capping"/>
</dbReference>
<dbReference type="Reactome" id="R-RNO-72163">
    <property type="pathway name" value="mRNA Splicing - Major Pathway"/>
</dbReference>
<dbReference type="Reactome" id="R-RNO-72165">
    <property type="pathway name" value="mRNA Splicing - Minor Pathway"/>
</dbReference>
<dbReference type="Reactome" id="R-RNO-72203">
    <property type="pathway name" value="Processing of Capped Intron-Containing Pre-mRNA"/>
</dbReference>
<dbReference type="Reactome" id="R-RNO-73776">
    <property type="pathway name" value="RNA Polymerase II Promoter Escape"/>
</dbReference>
<dbReference type="Reactome" id="R-RNO-73779">
    <property type="pathway name" value="RNA Polymerase II Transcription Pre-Initiation And Promoter Opening"/>
</dbReference>
<dbReference type="Reactome" id="R-RNO-75953">
    <property type="pathway name" value="RNA Polymerase II Transcription Initiation"/>
</dbReference>
<dbReference type="Reactome" id="R-RNO-75955">
    <property type="pathway name" value="RNA Polymerase II Transcription Elongation"/>
</dbReference>
<dbReference type="Reactome" id="R-RNO-76042">
    <property type="pathway name" value="RNA Polymerase II Transcription Initiation And Promoter Clearance"/>
</dbReference>
<dbReference type="Reactome" id="R-RNO-77075">
    <property type="pathway name" value="RNA Pol II CTD phosphorylation and interaction with CE"/>
</dbReference>
<dbReference type="Reactome" id="R-RNO-9018519">
    <property type="pathway name" value="Estrogen-dependent gene expression"/>
</dbReference>
<dbReference type="PRO" id="PR:Q6AY96"/>
<dbReference type="Proteomes" id="UP000002494">
    <property type="component" value="Chromosome 9"/>
</dbReference>
<dbReference type="Bgee" id="ENSRNOG00000047134">
    <property type="expression patterns" value="Expressed in testis and 19 other cell types or tissues"/>
</dbReference>
<dbReference type="GO" id="GO:0030054">
    <property type="term" value="C:cell junction"/>
    <property type="evidence" value="ECO:0007669"/>
    <property type="project" value="Ensembl"/>
</dbReference>
<dbReference type="GO" id="GO:0005634">
    <property type="term" value="C:nucleus"/>
    <property type="evidence" value="ECO:0000266"/>
    <property type="project" value="RGD"/>
</dbReference>
<dbReference type="GO" id="GO:0032991">
    <property type="term" value="C:protein-containing complex"/>
    <property type="evidence" value="ECO:0000266"/>
    <property type="project" value="RGD"/>
</dbReference>
<dbReference type="GO" id="GO:0005669">
    <property type="term" value="C:transcription factor TFIID complex"/>
    <property type="evidence" value="ECO:0000266"/>
    <property type="project" value="RGD"/>
</dbReference>
<dbReference type="GO" id="GO:0005674">
    <property type="term" value="C:transcription factor TFIIF complex"/>
    <property type="evidence" value="ECO:0000266"/>
    <property type="project" value="RGD"/>
</dbReference>
<dbReference type="GO" id="GO:0003677">
    <property type="term" value="F:DNA binding"/>
    <property type="evidence" value="ECO:0007669"/>
    <property type="project" value="UniProtKB-KW"/>
</dbReference>
<dbReference type="GO" id="GO:0019211">
    <property type="term" value="F:phosphatase activator activity"/>
    <property type="evidence" value="ECO:0000266"/>
    <property type="project" value="RGD"/>
</dbReference>
<dbReference type="GO" id="GO:1990841">
    <property type="term" value="F:promoter-specific chromatin binding"/>
    <property type="evidence" value="ECO:0000250"/>
    <property type="project" value="UniProtKB"/>
</dbReference>
<dbReference type="GO" id="GO:0019904">
    <property type="term" value="F:protein domain specific binding"/>
    <property type="evidence" value="ECO:0000266"/>
    <property type="project" value="RGD"/>
</dbReference>
<dbReference type="GO" id="GO:0019903">
    <property type="term" value="F:protein phosphatase binding"/>
    <property type="evidence" value="ECO:0000266"/>
    <property type="project" value="RGD"/>
</dbReference>
<dbReference type="GO" id="GO:0016251">
    <property type="term" value="F:RNA polymerase II general transcription initiation factor activity"/>
    <property type="evidence" value="ECO:0000266"/>
    <property type="project" value="RGD"/>
</dbReference>
<dbReference type="GO" id="GO:0001091">
    <property type="term" value="F:RNA polymerase II general transcription initiation factor binding"/>
    <property type="evidence" value="ECO:0000266"/>
    <property type="project" value="RGD"/>
</dbReference>
<dbReference type="GO" id="GO:0001096">
    <property type="term" value="F:TFIIF-class transcription factor complex binding"/>
    <property type="evidence" value="ECO:0000318"/>
    <property type="project" value="GO_Central"/>
</dbReference>
<dbReference type="GO" id="GO:0032091">
    <property type="term" value="P:negative regulation of protein binding"/>
    <property type="evidence" value="ECO:0000250"/>
    <property type="project" value="UniProtKB"/>
</dbReference>
<dbReference type="GO" id="GO:0045944">
    <property type="term" value="P:positive regulation of transcription by RNA polymerase II"/>
    <property type="evidence" value="ECO:0000314"/>
    <property type="project" value="RGD"/>
</dbReference>
<dbReference type="GO" id="GO:0032968">
    <property type="term" value="P:positive regulation of transcription elongation by RNA polymerase II"/>
    <property type="evidence" value="ECO:0007669"/>
    <property type="project" value="InterPro"/>
</dbReference>
<dbReference type="GO" id="GO:0009615">
    <property type="term" value="P:response to virus"/>
    <property type="evidence" value="ECO:0000266"/>
    <property type="project" value="RGD"/>
</dbReference>
<dbReference type="GO" id="GO:0006368">
    <property type="term" value="P:transcription elongation by RNA polymerase II"/>
    <property type="evidence" value="ECO:0000266"/>
    <property type="project" value="RGD"/>
</dbReference>
<dbReference type="GO" id="GO:0006367">
    <property type="term" value="P:transcription initiation at RNA polymerase II promoter"/>
    <property type="evidence" value="ECO:0000266"/>
    <property type="project" value="RGD"/>
</dbReference>
<dbReference type="CDD" id="cd00240">
    <property type="entry name" value="TFIIFa"/>
    <property type="match status" value="1"/>
</dbReference>
<dbReference type="FunFam" id="1.10.10.10:FF:000290">
    <property type="entry name" value="General transcription factor IIF subunit 1"/>
    <property type="match status" value="1"/>
</dbReference>
<dbReference type="Gene3D" id="1.10.10.10">
    <property type="entry name" value="Winged helix-like DNA-binding domain superfamily/Winged helix DNA-binding domain"/>
    <property type="match status" value="1"/>
</dbReference>
<dbReference type="InterPro" id="IPR008851">
    <property type="entry name" value="TFIIF-alpha"/>
</dbReference>
<dbReference type="InterPro" id="IPR011039">
    <property type="entry name" value="TFIIF_interaction"/>
</dbReference>
<dbReference type="InterPro" id="IPR036388">
    <property type="entry name" value="WH-like_DNA-bd_sf"/>
</dbReference>
<dbReference type="InterPro" id="IPR036390">
    <property type="entry name" value="WH_DNA-bd_sf"/>
</dbReference>
<dbReference type="PANTHER" id="PTHR13011:SF0">
    <property type="entry name" value="GENERAL TRANSCRIPTION FACTOR IIF SUBUNIT 1"/>
    <property type="match status" value="1"/>
</dbReference>
<dbReference type="PANTHER" id="PTHR13011">
    <property type="entry name" value="TFIIF-ALPHA"/>
    <property type="match status" value="1"/>
</dbReference>
<dbReference type="Pfam" id="PF05793">
    <property type="entry name" value="TFIIF_alpha"/>
    <property type="match status" value="1"/>
</dbReference>
<dbReference type="SUPFAM" id="SSF50916">
    <property type="entry name" value="Rap30/74 interaction domains"/>
    <property type="match status" value="2"/>
</dbReference>
<dbReference type="SUPFAM" id="SSF46785">
    <property type="entry name" value="Winged helix' DNA-binding domain"/>
    <property type="match status" value="1"/>
</dbReference>
<reference key="1">
    <citation type="journal article" date="2004" name="Genome Res.">
        <title>The status, quality, and expansion of the NIH full-length cDNA project: the Mammalian Gene Collection (MGC).</title>
        <authorList>
            <consortium name="The MGC Project Team"/>
        </authorList>
    </citation>
    <scope>NUCLEOTIDE SEQUENCE [LARGE SCALE MRNA]</scope>
    <source>
        <tissue>Kidney</tissue>
    </source>
</reference>
<reference key="2">
    <citation type="journal article" date="2012" name="Nat. Commun.">
        <title>Quantitative maps of protein phosphorylation sites across 14 different rat organs and tissues.</title>
        <authorList>
            <person name="Lundby A."/>
            <person name="Secher A."/>
            <person name="Lage K."/>
            <person name="Nordsborg N.B."/>
            <person name="Dmytriyev A."/>
            <person name="Lundby C."/>
            <person name="Olsen J.V."/>
        </authorList>
    </citation>
    <scope>PHOSPHORYLATION [LARGE SCALE ANALYSIS] AT SER-221; SER-224; SER-385; THR-389 AND SER-433</scope>
    <scope>IDENTIFICATION BY MASS SPECTROMETRY [LARGE SCALE ANALYSIS]</scope>
</reference>
<organism>
    <name type="scientific">Rattus norvegicus</name>
    <name type="common">Rat</name>
    <dbReference type="NCBI Taxonomy" id="10116"/>
    <lineage>
        <taxon>Eukaryota</taxon>
        <taxon>Metazoa</taxon>
        <taxon>Chordata</taxon>
        <taxon>Craniata</taxon>
        <taxon>Vertebrata</taxon>
        <taxon>Euteleostomi</taxon>
        <taxon>Mammalia</taxon>
        <taxon>Eutheria</taxon>
        <taxon>Euarchontoglires</taxon>
        <taxon>Glires</taxon>
        <taxon>Rodentia</taxon>
        <taxon>Myomorpha</taxon>
        <taxon>Muroidea</taxon>
        <taxon>Muridae</taxon>
        <taxon>Murinae</taxon>
        <taxon>Rattus</taxon>
    </lineage>
</organism>
<proteinExistence type="evidence at protein level"/>
<name>T2FA_RAT</name>
<accession>Q6AY96</accession>
<evidence type="ECO:0000250" key="1"/>
<evidence type="ECO:0000250" key="2">
    <source>
        <dbReference type="UniProtKB" id="P35269"/>
    </source>
</evidence>
<evidence type="ECO:0000256" key="3">
    <source>
        <dbReference type="SAM" id="MobiDB-lite"/>
    </source>
</evidence>
<evidence type="ECO:0000305" key="4"/>
<evidence type="ECO:0007744" key="5">
    <source>
    </source>
</evidence>
<feature type="initiator methionine" description="Removed" evidence="2">
    <location>
        <position position="1"/>
    </location>
</feature>
<feature type="chain" id="PRO_0000260323" description="General transcription factor IIF subunit 1">
    <location>
        <begin position="2"/>
        <end position="508"/>
    </location>
</feature>
<feature type="region of interest" description="Disordered" evidence="3">
    <location>
        <begin position="177"/>
        <end position="448"/>
    </location>
</feature>
<feature type="compositionally biased region" description="Basic residues" evidence="3">
    <location>
        <begin position="232"/>
        <end position="251"/>
    </location>
</feature>
<feature type="compositionally biased region" description="Acidic residues" evidence="3">
    <location>
        <begin position="255"/>
        <end position="270"/>
    </location>
</feature>
<feature type="compositionally biased region" description="Acidic residues" evidence="3">
    <location>
        <begin position="303"/>
        <end position="325"/>
    </location>
</feature>
<feature type="compositionally biased region" description="Acidic residues" evidence="3">
    <location>
        <begin position="343"/>
        <end position="355"/>
    </location>
</feature>
<feature type="compositionally biased region" description="Basic residues" evidence="3">
    <location>
        <begin position="364"/>
        <end position="374"/>
    </location>
</feature>
<feature type="compositionally biased region" description="Polar residues" evidence="3">
    <location>
        <begin position="378"/>
        <end position="388"/>
    </location>
</feature>
<feature type="compositionally biased region" description="Low complexity" evidence="3">
    <location>
        <begin position="389"/>
        <end position="406"/>
    </location>
</feature>
<feature type="compositionally biased region" description="Polar residues" evidence="3">
    <location>
        <begin position="428"/>
        <end position="443"/>
    </location>
</feature>
<feature type="modified residue" description="N-acetylalanine" evidence="2">
    <location>
        <position position="2"/>
    </location>
</feature>
<feature type="modified residue" description="Phosphothreonine" evidence="2">
    <location>
        <position position="156"/>
    </location>
</feature>
<feature type="modified residue" description="Phosphoserine" evidence="2">
    <location>
        <position position="217"/>
    </location>
</feature>
<feature type="modified residue" description="Phosphoserine" evidence="2">
    <location>
        <position position="218"/>
    </location>
</feature>
<feature type="modified residue" description="Phosphoserine" evidence="5">
    <location>
        <position position="221"/>
    </location>
</feature>
<feature type="modified residue" description="Phosphoserine" evidence="5">
    <location>
        <position position="224"/>
    </location>
</feature>
<feature type="modified residue" description="Phosphothreonine" evidence="2">
    <location>
        <position position="331"/>
    </location>
</feature>
<feature type="modified residue" description="Phosphoserine" evidence="2">
    <location>
        <position position="377"/>
    </location>
</feature>
<feature type="modified residue" description="Phosphoserine" evidence="2">
    <location>
        <position position="380"/>
    </location>
</feature>
<feature type="modified residue" description="Phosphoserine" evidence="2">
    <location>
        <position position="381"/>
    </location>
</feature>
<feature type="modified residue" description="Phosphoserine" evidence="5">
    <location>
        <position position="385"/>
    </location>
</feature>
<feature type="modified residue" description="Phosphothreonine" evidence="5">
    <location>
        <position position="389"/>
    </location>
</feature>
<feature type="modified residue" description="Phosphoserine" evidence="2">
    <location>
        <position position="391"/>
    </location>
</feature>
<feature type="modified residue" description="N6-acetyllysine" evidence="2">
    <location>
        <position position="407"/>
    </location>
</feature>
<feature type="modified residue" description="Phosphoserine" evidence="2">
    <location>
        <position position="431"/>
    </location>
</feature>
<feature type="modified residue" description="Phosphoserine" evidence="5">
    <location>
        <position position="433"/>
    </location>
</feature>
<feature type="modified residue" description="Phosphoserine" evidence="2">
    <location>
        <position position="436"/>
    </location>
</feature>
<feature type="modified residue" description="Phosphothreonine" evidence="2">
    <location>
        <position position="437"/>
    </location>
</feature>
<feature type="modified residue" description="Phosphoserine" evidence="2">
    <location>
        <position position="440"/>
    </location>
</feature>
<sequence>MAALGSSSQNVTEYVVRVPKNTAKRYNIMAFNAADKVNFATWNQARLERDLSNKKIYQEEEMPESGAGSEFNRKLREEARRKKYGIVLKEFRPEDQPWLLRVNGKSGRKFKGIKKGGVTENTAYYIFTQCADGAFEAFPVQNWYNFTPLARHRTLTAEEAEEEWERRNKVLNHFSIMQQRRLKDQDQDEDEEEKEKRSRKKPSELRIHDLEDDLEMSSDASDASGEEGSRASKAKKKAPVTKAGRKKKKKKGSDDEAFEDSDDGDFEGQEVDYMSDGSSSSPDEAEGKPKVPQQEDGPKGVDEQSESSEESEEEKPPEEDKEEEEEKKAPTPQEKKRRKDSSDDSDSSEESDIDSETSSALFMAKKKTPPKRERKPSGGSSKGTSRPGTPSAEAASTSSTLRAAASKLEQGKRTSETPAAKRLRMDTGPQSLSGKSTPSSGDVQVTEDAVRRYLTRKPMTTKDLLKKFQTKKTGLSSEQTVNVLAQILKRLNPERKMIGDKMHFSLKE</sequence>
<protein>
    <recommendedName>
        <fullName>General transcription factor IIF subunit 1</fullName>
    </recommendedName>
    <alternativeName>
        <fullName>Transcription initiation factor IIF subunit alpha</fullName>
        <shortName>TFIIF-alpha</shortName>
    </alternativeName>
</protein>